<accession>Q8LG03</accession>
<accession>O23101</accession>
<accession>Q84WE1</accession>
<gene>
    <name type="ordered locus">At4g00755</name>
    <name type="ORF">A_TM018A10.10</name>
</gene>
<comment type="sequence caution" evidence="1">
    <conflict type="erroneous gene model prediction">
        <sequence resource="EMBL-CDS" id="AAB62869"/>
    </conflict>
</comment>
<keyword id="KW-1185">Reference proteome</keyword>
<evidence type="ECO:0000305" key="1"/>
<sequence length="377" mass="42775">MDFVNNLDTDTSLSILSCLDDPSDIVRASAVSRSWRQFVVKYSLSKNLCLKLFHQLSNVDHIIETSNDRNGESSEAGSSSLMDTRLLEKEHRAFALLARGCMSSPIESCIADAIRASSTDNYPVESILNTLEKRDRIGRTPSYWSSTGQHKTTVPESLLYKLIGDLCLITEVSIHPFQAYFQRGHPIYSSHYVRFRLGHEKDNSPHYNNSQDKKGEPGKSSIESNYVWTYTSQEFSMAQENRLQSFQLPEPVLCIGGYLLVEFLGRVQTQEMDGQYYICVSHVKVEGRSLAKSFRVENVDDNGKFGLKVLSYNDPKKMEEMDAEAGQDMDAEAGQSQLRNLEQLLNLLHRHPLDVVDYVWPDESDDEYAESEDEAEP</sequence>
<dbReference type="EMBL" id="AF013294">
    <property type="protein sequence ID" value="AAB62869.1"/>
    <property type="status" value="ALT_SEQ"/>
    <property type="molecule type" value="Genomic_DNA"/>
</dbReference>
<dbReference type="EMBL" id="CP002687">
    <property type="protein sequence ID" value="AEE81931.1"/>
    <property type="molecule type" value="Genomic_DNA"/>
</dbReference>
<dbReference type="EMBL" id="CP002687">
    <property type="protein sequence ID" value="AEE81932.1"/>
    <property type="molecule type" value="Genomic_DNA"/>
</dbReference>
<dbReference type="EMBL" id="BT003918">
    <property type="protein sequence ID" value="AAO41965.1"/>
    <property type="molecule type" value="mRNA"/>
</dbReference>
<dbReference type="EMBL" id="AY084538">
    <property type="protein sequence ID" value="AAM61106.1"/>
    <property type="molecule type" value="mRNA"/>
</dbReference>
<dbReference type="PIR" id="T01571">
    <property type="entry name" value="T01571"/>
</dbReference>
<dbReference type="RefSeq" id="NP_567185.1">
    <property type="nucleotide sequence ID" value="NM_116301.3"/>
</dbReference>
<dbReference type="RefSeq" id="NP_849277.1">
    <property type="nucleotide sequence ID" value="NM_178946.4"/>
</dbReference>
<dbReference type="FunCoup" id="Q8LG03">
    <property type="interactions" value="1306"/>
</dbReference>
<dbReference type="STRING" id="3702.Q8LG03"/>
<dbReference type="iPTMnet" id="Q8LG03"/>
<dbReference type="PaxDb" id="3702-AT4G00755.1"/>
<dbReference type="ProteomicsDB" id="222389"/>
<dbReference type="DNASU" id="828014"/>
<dbReference type="EnsemblPlants" id="AT4G00755.1">
    <property type="protein sequence ID" value="AT4G00755.1"/>
    <property type="gene ID" value="AT4G00755"/>
</dbReference>
<dbReference type="EnsemblPlants" id="AT4G00755.2">
    <property type="protein sequence ID" value="AT4G00755.2"/>
    <property type="gene ID" value="AT4G00755"/>
</dbReference>
<dbReference type="GeneID" id="828014"/>
<dbReference type="Gramene" id="AT4G00755.1">
    <property type="protein sequence ID" value="AT4G00755.1"/>
    <property type="gene ID" value="AT4G00755"/>
</dbReference>
<dbReference type="Gramene" id="AT4G00755.2">
    <property type="protein sequence ID" value="AT4G00755.2"/>
    <property type="gene ID" value="AT4G00755"/>
</dbReference>
<dbReference type="KEGG" id="ath:AT4G00755"/>
<dbReference type="Araport" id="AT4G00755"/>
<dbReference type="TAIR" id="AT4G00755"/>
<dbReference type="eggNOG" id="ENOG502QRFZ">
    <property type="taxonomic scope" value="Eukaryota"/>
</dbReference>
<dbReference type="HOGENOM" id="CLU_042470_1_1_1"/>
<dbReference type="InParanoid" id="Q8LG03"/>
<dbReference type="OMA" id="AYMHLSY"/>
<dbReference type="OrthoDB" id="63379at2759"/>
<dbReference type="PhylomeDB" id="Q8LG03"/>
<dbReference type="PRO" id="PR:Q8LG03"/>
<dbReference type="Proteomes" id="UP000006548">
    <property type="component" value="Chromosome 4"/>
</dbReference>
<dbReference type="ExpressionAtlas" id="Q8LG03">
    <property type="expression patterns" value="baseline and differential"/>
</dbReference>
<dbReference type="CDD" id="cd09917">
    <property type="entry name" value="F-box_SF"/>
    <property type="match status" value="1"/>
</dbReference>
<dbReference type="Gene3D" id="1.20.1280.50">
    <property type="match status" value="1"/>
</dbReference>
<dbReference type="InterPro" id="IPR055336">
    <property type="entry name" value="At4g00755-like"/>
</dbReference>
<dbReference type="InterPro" id="IPR036047">
    <property type="entry name" value="F-box-like_dom_sf"/>
</dbReference>
<dbReference type="InterPro" id="IPR001810">
    <property type="entry name" value="F-box_dom"/>
</dbReference>
<dbReference type="PANTHER" id="PTHR39741">
    <property type="entry name" value="F-BOX DOMAIN CONTAINING PROTEIN, EXPRESSED"/>
    <property type="match status" value="1"/>
</dbReference>
<dbReference type="PANTHER" id="PTHR39741:SF14">
    <property type="entry name" value="F-BOX DOMAIN-CONTAINING PROTEIN"/>
    <property type="match status" value="1"/>
</dbReference>
<dbReference type="Pfam" id="PF12937">
    <property type="entry name" value="F-box-like"/>
    <property type="match status" value="1"/>
</dbReference>
<dbReference type="SUPFAM" id="SSF81383">
    <property type="entry name" value="F-box domain"/>
    <property type="match status" value="1"/>
</dbReference>
<feature type="chain" id="PRO_0000396061" description="F-box protein At4g00755">
    <location>
        <begin position="1"/>
        <end position="377"/>
    </location>
</feature>
<feature type="domain" description="F-box">
    <location>
        <begin position="7"/>
        <end position="47"/>
    </location>
</feature>
<name>FB345_ARATH</name>
<proteinExistence type="evidence at transcript level"/>
<organism>
    <name type="scientific">Arabidopsis thaliana</name>
    <name type="common">Mouse-ear cress</name>
    <dbReference type="NCBI Taxonomy" id="3702"/>
    <lineage>
        <taxon>Eukaryota</taxon>
        <taxon>Viridiplantae</taxon>
        <taxon>Streptophyta</taxon>
        <taxon>Embryophyta</taxon>
        <taxon>Tracheophyta</taxon>
        <taxon>Spermatophyta</taxon>
        <taxon>Magnoliopsida</taxon>
        <taxon>eudicotyledons</taxon>
        <taxon>Gunneridae</taxon>
        <taxon>Pentapetalae</taxon>
        <taxon>rosids</taxon>
        <taxon>malvids</taxon>
        <taxon>Brassicales</taxon>
        <taxon>Brassicaceae</taxon>
        <taxon>Camelineae</taxon>
        <taxon>Arabidopsis</taxon>
    </lineage>
</organism>
<protein>
    <recommendedName>
        <fullName>F-box protein At4g00755</fullName>
    </recommendedName>
</protein>
<reference key="1">
    <citation type="journal article" date="1999" name="Nature">
        <title>Sequence and analysis of chromosome 4 of the plant Arabidopsis thaliana.</title>
        <authorList>
            <person name="Mayer K.F.X."/>
            <person name="Schueller C."/>
            <person name="Wambutt R."/>
            <person name="Murphy G."/>
            <person name="Volckaert G."/>
            <person name="Pohl T."/>
            <person name="Duesterhoeft A."/>
            <person name="Stiekema W."/>
            <person name="Entian K.-D."/>
            <person name="Terryn N."/>
            <person name="Harris B."/>
            <person name="Ansorge W."/>
            <person name="Brandt P."/>
            <person name="Grivell L.A."/>
            <person name="Rieger M."/>
            <person name="Weichselgartner M."/>
            <person name="de Simone V."/>
            <person name="Obermaier B."/>
            <person name="Mache R."/>
            <person name="Mueller M."/>
            <person name="Kreis M."/>
            <person name="Delseny M."/>
            <person name="Puigdomenech P."/>
            <person name="Watson M."/>
            <person name="Schmidtheini T."/>
            <person name="Reichert B."/>
            <person name="Portetelle D."/>
            <person name="Perez-Alonso M."/>
            <person name="Boutry M."/>
            <person name="Bancroft I."/>
            <person name="Vos P."/>
            <person name="Hoheisel J."/>
            <person name="Zimmermann W."/>
            <person name="Wedler H."/>
            <person name="Ridley P."/>
            <person name="Langham S.-A."/>
            <person name="McCullagh B."/>
            <person name="Bilham L."/>
            <person name="Robben J."/>
            <person name="van der Schueren J."/>
            <person name="Grymonprez B."/>
            <person name="Chuang Y.-J."/>
            <person name="Vandenbussche F."/>
            <person name="Braeken M."/>
            <person name="Weltjens I."/>
            <person name="Voet M."/>
            <person name="Bastiaens I."/>
            <person name="Aert R."/>
            <person name="Defoor E."/>
            <person name="Weitzenegger T."/>
            <person name="Bothe G."/>
            <person name="Ramsperger U."/>
            <person name="Hilbert H."/>
            <person name="Braun M."/>
            <person name="Holzer E."/>
            <person name="Brandt A."/>
            <person name="Peters S."/>
            <person name="van Staveren M."/>
            <person name="Dirkse W."/>
            <person name="Mooijman P."/>
            <person name="Klein Lankhorst R."/>
            <person name="Rose M."/>
            <person name="Hauf J."/>
            <person name="Koetter P."/>
            <person name="Berneiser S."/>
            <person name="Hempel S."/>
            <person name="Feldpausch M."/>
            <person name="Lamberth S."/>
            <person name="Van den Daele H."/>
            <person name="De Keyser A."/>
            <person name="Buysshaert C."/>
            <person name="Gielen J."/>
            <person name="Villarroel R."/>
            <person name="De Clercq R."/>
            <person name="van Montagu M."/>
            <person name="Rogers J."/>
            <person name="Cronin A."/>
            <person name="Quail M.A."/>
            <person name="Bray-Allen S."/>
            <person name="Clark L."/>
            <person name="Doggett J."/>
            <person name="Hall S."/>
            <person name="Kay M."/>
            <person name="Lennard N."/>
            <person name="McLay K."/>
            <person name="Mayes R."/>
            <person name="Pettett A."/>
            <person name="Rajandream M.A."/>
            <person name="Lyne M."/>
            <person name="Benes V."/>
            <person name="Rechmann S."/>
            <person name="Borkova D."/>
            <person name="Bloecker H."/>
            <person name="Scharfe M."/>
            <person name="Grimm M."/>
            <person name="Loehnert T.-H."/>
            <person name="Dose S."/>
            <person name="de Haan M."/>
            <person name="Maarse A.C."/>
            <person name="Schaefer M."/>
            <person name="Mueller-Auer S."/>
            <person name="Gabel C."/>
            <person name="Fuchs M."/>
            <person name="Fartmann B."/>
            <person name="Granderath K."/>
            <person name="Dauner D."/>
            <person name="Herzl A."/>
            <person name="Neumann S."/>
            <person name="Argiriou A."/>
            <person name="Vitale D."/>
            <person name="Liguori R."/>
            <person name="Piravandi E."/>
            <person name="Massenet O."/>
            <person name="Quigley F."/>
            <person name="Clabauld G."/>
            <person name="Muendlein A."/>
            <person name="Felber R."/>
            <person name="Schnabl S."/>
            <person name="Hiller R."/>
            <person name="Schmidt W."/>
            <person name="Lecharny A."/>
            <person name="Aubourg S."/>
            <person name="Chefdor F."/>
            <person name="Cooke R."/>
            <person name="Berger C."/>
            <person name="Monfort A."/>
            <person name="Casacuberta E."/>
            <person name="Gibbons T."/>
            <person name="Weber N."/>
            <person name="Vandenbol M."/>
            <person name="Bargues M."/>
            <person name="Terol J."/>
            <person name="Torres A."/>
            <person name="Perez-Perez A."/>
            <person name="Purnelle B."/>
            <person name="Bent E."/>
            <person name="Johnson S."/>
            <person name="Tacon D."/>
            <person name="Jesse T."/>
            <person name="Heijnen L."/>
            <person name="Schwarz S."/>
            <person name="Scholler P."/>
            <person name="Heber S."/>
            <person name="Francs P."/>
            <person name="Bielke C."/>
            <person name="Frishman D."/>
            <person name="Haase D."/>
            <person name="Lemcke K."/>
            <person name="Mewes H.-W."/>
            <person name="Stocker S."/>
            <person name="Zaccaria P."/>
            <person name="Bevan M."/>
            <person name="Wilson R.K."/>
            <person name="de la Bastide M."/>
            <person name="Habermann K."/>
            <person name="Parnell L."/>
            <person name="Dedhia N."/>
            <person name="Gnoj L."/>
            <person name="Schutz K."/>
            <person name="Huang E."/>
            <person name="Spiegel L."/>
            <person name="Sekhon M."/>
            <person name="Murray J."/>
            <person name="Sheet P."/>
            <person name="Cordes M."/>
            <person name="Abu-Threideh J."/>
            <person name="Stoneking T."/>
            <person name="Kalicki J."/>
            <person name="Graves T."/>
            <person name="Harmon G."/>
            <person name="Edwards J."/>
            <person name="Latreille P."/>
            <person name="Courtney L."/>
            <person name="Cloud J."/>
            <person name="Abbott A."/>
            <person name="Scott K."/>
            <person name="Johnson D."/>
            <person name="Minx P."/>
            <person name="Bentley D."/>
            <person name="Fulton B."/>
            <person name="Miller N."/>
            <person name="Greco T."/>
            <person name="Kemp K."/>
            <person name="Kramer J."/>
            <person name="Fulton L."/>
            <person name="Mardis E."/>
            <person name="Dante M."/>
            <person name="Pepin K."/>
            <person name="Hillier L.W."/>
            <person name="Nelson J."/>
            <person name="Spieth J."/>
            <person name="Ryan E."/>
            <person name="Andrews S."/>
            <person name="Geisel C."/>
            <person name="Layman D."/>
            <person name="Du H."/>
            <person name="Ali J."/>
            <person name="Berghoff A."/>
            <person name="Jones K."/>
            <person name="Drone K."/>
            <person name="Cotton M."/>
            <person name="Joshu C."/>
            <person name="Antonoiu B."/>
            <person name="Zidanic M."/>
            <person name="Strong C."/>
            <person name="Sun H."/>
            <person name="Lamar B."/>
            <person name="Yordan C."/>
            <person name="Ma P."/>
            <person name="Zhong J."/>
            <person name="Preston R."/>
            <person name="Vil D."/>
            <person name="Shekher M."/>
            <person name="Matero A."/>
            <person name="Shah R."/>
            <person name="Swaby I.K."/>
            <person name="O'Shaughnessy A."/>
            <person name="Rodriguez M."/>
            <person name="Hoffman J."/>
            <person name="Till S."/>
            <person name="Granat S."/>
            <person name="Shohdy N."/>
            <person name="Hasegawa A."/>
            <person name="Hameed A."/>
            <person name="Lodhi M."/>
            <person name="Johnson A."/>
            <person name="Chen E."/>
            <person name="Marra M.A."/>
            <person name="Martienssen R."/>
            <person name="McCombie W.R."/>
        </authorList>
    </citation>
    <scope>NUCLEOTIDE SEQUENCE [LARGE SCALE GENOMIC DNA]</scope>
    <source>
        <strain>cv. Columbia</strain>
    </source>
</reference>
<reference key="2">
    <citation type="journal article" date="2017" name="Plant J.">
        <title>Araport11: a complete reannotation of the Arabidopsis thaliana reference genome.</title>
        <authorList>
            <person name="Cheng C.Y."/>
            <person name="Krishnakumar V."/>
            <person name="Chan A.P."/>
            <person name="Thibaud-Nissen F."/>
            <person name="Schobel S."/>
            <person name="Town C.D."/>
        </authorList>
    </citation>
    <scope>GENOME REANNOTATION</scope>
    <source>
        <strain>cv. Columbia</strain>
    </source>
</reference>
<reference key="3">
    <citation type="journal article" date="2003" name="Science">
        <title>Empirical analysis of transcriptional activity in the Arabidopsis genome.</title>
        <authorList>
            <person name="Yamada K."/>
            <person name="Lim J."/>
            <person name="Dale J.M."/>
            <person name="Chen H."/>
            <person name="Shinn P."/>
            <person name="Palm C.J."/>
            <person name="Southwick A.M."/>
            <person name="Wu H.C."/>
            <person name="Kim C.J."/>
            <person name="Nguyen M."/>
            <person name="Pham P.K."/>
            <person name="Cheuk R.F."/>
            <person name="Karlin-Newmann G."/>
            <person name="Liu S.X."/>
            <person name="Lam B."/>
            <person name="Sakano H."/>
            <person name="Wu T."/>
            <person name="Yu G."/>
            <person name="Miranda M."/>
            <person name="Quach H.L."/>
            <person name="Tripp M."/>
            <person name="Chang C.H."/>
            <person name="Lee J.M."/>
            <person name="Toriumi M.J."/>
            <person name="Chan M.M."/>
            <person name="Tang C.C."/>
            <person name="Onodera C.S."/>
            <person name="Deng J.M."/>
            <person name="Akiyama K."/>
            <person name="Ansari Y."/>
            <person name="Arakawa T."/>
            <person name="Banh J."/>
            <person name="Banno F."/>
            <person name="Bowser L."/>
            <person name="Brooks S.Y."/>
            <person name="Carninci P."/>
            <person name="Chao Q."/>
            <person name="Choy N."/>
            <person name="Enju A."/>
            <person name="Goldsmith A.D."/>
            <person name="Gurjal M."/>
            <person name="Hansen N.F."/>
            <person name="Hayashizaki Y."/>
            <person name="Johnson-Hopson C."/>
            <person name="Hsuan V.W."/>
            <person name="Iida K."/>
            <person name="Karnes M."/>
            <person name="Khan S."/>
            <person name="Koesema E."/>
            <person name="Ishida J."/>
            <person name="Jiang P.X."/>
            <person name="Jones T."/>
            <person name="Kawai J."/>
            <person name="Kamiya A."/>
            <person name="Meyers C."/>
            <person name="Nakajima M."/>
            <person name="Narusaka M."/>
            <person name="Seki M."/>
            <person name="Sakurai T."/>
            <person name="Satou M."/>
            <person name="Tamse R."/>
            <person name="Vaysberg M."/>
            <person name="Wallender E.K."/>
            <person name="Wong C."/>
            <person name="Yamamura Y."/>
            <person name="Yuan S."/>
            <person name="Shinozaki K."/>
            <person name="Davis R.W."/>
            <person name="Theologis A."/>
            <person name="Ecker J.R."/>
        </authorList>
    </citation>
    <scope>NUCLEOTIDE SEQUENCE [LARGE SCALE MRNA] OF 133-377</scope>
    <source>
        <strain>cv. Columbia</strain>
    </source>
</reference>
<reference key="4">
    <citation type="submission" date="2002-03" db="EMBL/GenBank/DDBJ databases">
        <title>Full-length cDNA from Arabidopsis thaliana.</title>
        <authorList>
            <person name="Brover V.V."/>
            <person name="Troukhan M.E."/>
            <person name="Alexandrov N.A."/>
            <person name="Lu Y.-P."/>
            <person name="Flavell R.B."/>
            <person name="Feldmann K.A."/>
        </authorList>
    </citation>
    <scope>NUCLEOTIDE SEQUENCE [LARGE SCALE MRNA]</scope>
    <source>
        <strain>cv. Columbia</strain>
    </source>
</reference>